<organism>
    <name type="scientific">Escherichia coli O157:H7</name>
    <dbReference type="NCBI Taxonomy" id="83334"/>
    <lineage>
        <taxon>Bacteria</taxon>
        <taxon>Pseudomonadati</taxon>
        <taxon>Pseudomonadota</taxon>
        <taxon>Gammaproteobacteria</taxon>
        <taxon>Enterobacterales</taxon>
        <taxon>Enterobacteriaceae</taxon>
        <taxon>Escherichia</taxon>
    </lineage>
</organism>
<evidence type="ECO:0000250" key="1"/>
<evidence type="ECO:0000305" key="2"/>
<keyword id="KW-0963">Cytoplasm</keyword>
<keyword id="KW-0489">Methyltransferase</keyword>
<keyword id="KW-1185">Reference proteome</keyword>
<keyword id="KW-0949">S-adenosyl-L-methionine</keyword>
<keyword id="KW-0808">Transferase</keyword>
<protein>
    <recommendedName>
        <fullName>Trans-aconitate 2-methyltransferase</fullName>
        <ecNumber>2.1.1.144</ecNumber>
    </recommendedName>
</protein>
<accession>Q8XAZ2</accession>
<gene>
    <name type="primary">tam</name>
    <name type="ordered locus">Z2186</name>
    <name type="ordered locus">ECs2126</name>
</gene>
<feature type="initiator methionine" description="Removed" evidence="1">
    <location>
        <position position="1"/>
    </location>
</feature>
<feature type="chain" id="PRO_0000218081" description="Trans-aconitate 2-methyltransferase">
    <location>
        <begin position="2"/>
        <end position="252"/>
    </location>
</feature>
<name>TAM_ECO57</name>
<sequence length="252" mass="28947">MSDWNPSLYLHFAAERSRPAVELLARVPLENVDYVADLGCGPGNSTALLHQRWPAARITGIDSSPAMIAEARSALPDCQFVEADIRNWQPEQALDLIFANASLQWLPDHYELFPHLVSLLNPQGVLAVQMPDNWLEPTHVLMREVAWEQNYPDRGRESLAGVHAYYDILSEAGCEVDIWRTTYYHQMPSHQAIIDWVTATGLRPWLQDLTESEQQLFLTRYHQMLKEQYPLQENGQILLAFPRLFIVARRTE</sequence>
<dbReference type="EC" id="2.1.1.144"/>
<dbReference type="EMBL" id="AE005174">
    <property type="protein sequence ID" value="AAG56247.1"/>
    <property type="molecule type" value="Genomic_DNA"/>
</dbReference>
<dbReference type="EMBL" id="BA000007">
    <property type="protein sequence ID" value="BAB35549.1"/>
    <property type="molecule type" value="Genomic_DNA"/>
</dbReference>
<dbReference type="PIR" id="C85723">
    <property type="entry name" value="C85723"/>
</dbReference>
<dbReference type="PIR" id="F90894">
    <property type="entry name" value="F90894"/>
</dbReference>
<dbReference type="RefSeq" id="NP_310153.1">
    <property type="nucleotide sequence ID" value="NC_002695.1"/>
</dbReference>
<dbReference type="RefSeq" id="WP_001286577.1">
    <property type="nucleotide sequence ID" value="NZ_VOAI01000024.1"/>
</dbReference>
<dbReference type="SMR" id="Q8XAZ2"/>
<dbReference type="STRING" id="155864.Z2186"/>
<dbReference type="GeneID" id="917326"/>
<dbReference type="KEGG" id="ece:Z2186"/>
<dbReference type="KEGG" id="ecs:ECs_2126"/>
<dbReference type="PATRIC" id="fig|386585.9.peg.2232"/>
<dbReference type="eggNOG" id="COG4106">
    <property type="taxonomic scope" value="Bacteria"/>
</dbReference>
<dbReference type="HOGENOM" id="CLU_037990_5_2_6"/>
<dbReference type="OMA" id="YLAFADH"/>
<dbReference type="Proteomes" id="UP000000558">
    <property type="component" value="Chromosome"/>
</dbReference>
<dbReference type="Proteomes" id="UP000002519">
    <property type="component" value="Chromosome"/>
</dbReference>
<dbReference type="GO" id="GO:0005737">
    <property type="term" value="C:cytoplasm"/>
    <property type="evidence" value="ECO:0007669"/>
    <property type="project" value="UniProtKB-SubCell"/>
</dbReference>
<dbReference type="GO" id="GO:0030798">
    <property type="term" value="F:trans-aconitate 2-methyltransferase activity"/>
    <property type="evidence" value="ECO:0007669"/>
    <property type="project" value="UniProtKB-UniRule"/>
</dbReference>
<dbReference type="GO" id="GO:0032259">
    <property type="term" value="P:methylation"/>
    <property type="evidence" value="ECO:0007669"/>
    <property type="project" value="UniProtKB-KW"/>
</dbReference>
<dbReference type="CDD" id="cd02440">
    <property type="entry name" value="AdoMet_MTases"/>
    <property type="match status" value="1"/>
</dbReference>
<dbReference type="Gene3D" id="1.10.150.290">
    <property type="entry name" value="S-adenosyl-L-methionine-dependent methyltransferases"/>
    <property type="match status" value="1"/>
</dbReference>
<dbReference type="Gene3D" id="3.40.50.150">
    <property type="entry name" value="Vaccinia Virus protein VP39"/>
    <property type="match status" value="1"/>
</dbReference>
<dbReference type="HAMAP" id="MF_00560">
    <property type="entry name" value="Tran_acon_Me_trans"/>
    <property type="match status" value="1"/>
</dbReference>
<dbReference type="InterPro" id="IPR041698">
    <property type="entry name" value="Methyltransf_25"/>
</dbReference>
<dbReference type="InterPro" id="IPR029063">
    <property type="entry name" value="SAM-dependent_MTases_sf"/>
</dbReference>
<dbReference type="InterPro" id="IPR023506">
    <property type="entry name" value="Trans-aconitate_MeTrfase"/>
</dbReference>
<dbReference type="InterPro" id="IPR023149">
    <property type="entry name" value="Trans_acon_MeTrfase_C"/>
</dbReference>
<dbReference type="NCBIfam" id="NF002463">
    <property type="entry name" value="PRK01683.1"/>
    <property type="match status" value="1"/>
</dbReference>
<dbReference type="PANTHER" id="PTHR43861:SF1">
    <property type="entry name" value="TRANS-ACONITATE 2-METHYLTRANSFERASE"/>
    <property type="match status" value="1"/>
</dbReference>
<dbReference type="PANTHER" id="PTHR43861">
    <property type="entry name" value="TRANS-ACONITATE 2-METHYLTRANSFERASE-RELATED"/>
    <property type="match status" value="1"/>
</dbReference>
<dbReference type="Pfam" id="PF13649">
    <property type="entry name" value="Methyltransf_25"/>
    <property type="match status" value="1"/>
</dbReference>
<dbReference type="SUPFAM" id="SSF53335">
    <property type="entry name" value="S-adenosyl-L-methionine-dependent methyltransferases"/>
    <property type="match status" value="1"/>
</dbReference>
<proteinExistence type="inferred from homology"/>
<comment type="function">
    <text evidence="1">Catalyzes the S-adenosylmethionine monomethyl esterification of trans-aconitate at high affinity and of cis-aconitate, isocitrate, and citrate at lower velocities and affinities.</text>
</comment>
<comment type="catalytic activity">
    <reaction>
        <text>trans-aconitate + S-adenosyl-L-methionine = (E)-3-(methoxycarbonyl)pent-2-enedioate + S-adenosyl-L-homocysteine</text>
        <dbReference type="Rhea" id="RHEA:14969"/>
        <dbReference type="ChEBI" id="CHEBI:15708"/>
        <dbReference type="ChEBI" id="CHEBI:57470"/>
        <dbReference type="ChEBI" id="CHEBI:57856"/>
        <dbReference type="ChEBI" id="CHEBI:59789"/>
        <dbReference type="EC" id="2.1.1.144"/>
    </reaction>
</comment>
<comment type="subunit">
    <text evidence="1">Monomer.</text>
</comment>
<comment type="subcellular location">
    <subcellularLocation>
        <location evidence="1">Cytoplasm</location>
    </subcellularLocation>
</comment>
<comment type="similarity">
    <text evidence="2">Belongs to the methyltransferase superfamily. Tam family.</text>
</comment>
<reference key="1">
    <citation type="journal article" date="2001" name="Nature">
        <title>Genome sequence of enterohaemorrhagic Escherichia coli O157:H7.</title>
        <authorList>
            <person name="Perna N.T."/>
            <person name="Plunkett G. III"/>
            <person name="Burland V."/>
            <person name="Mau B."/>
            <person name="Glasner J.D."/>
            <person name="Rose D.J."/>
            <person name="Mayhew G.F."/>
            <person name="Evans P.S."/>
            <person name="Gregor J."/>
            <person name="Kirkpatrick H.A."/>
            <person name="Posfai G."/>
            <person name="Hackett J."/>
            <person name="Klink S."/>
            <person name="Boutin A."/>
            <person name="Shao Y."/>
            <person name="Miller L."/>
            <person name="Grotbeck E.J."/>
            <person name="Davis N.W."/>
            <person name="Lim A."/>
            <person name="Dimalanta E.T."/>
            <person name="Potamousis K."/>
            <person name="Apodaca J."/>
            <person name="Anantharaman T.S."/>
            <person name="Lin J."/>
            <person name="Yen G."/>
            <person name="Schwartz D.C."/>
            <person name="Welch R.A."/>
            <person name="Blattner F.R."/>
        </authorList>
    </citation>
    <scope>NUCLEOTIDE SEQUENCE [LARGE SCALE GENOMIC DNA]</scope>
    <source>
        <strain>O157:H7 / EDL933 / ATCC 700927 / EHEC</strain>
    </source>
</reference>
<reference key="2">
    <citation type="journal article" date="2001" name="DNA Res.">
        <title>Complete genome sequence of enterohemorrhagic Escherichia coli O157:H7 and genomic comparison with a laboratory strain K-12.</title>
        <authorList>
            <person name="Hayashi T."/>
            <person name="Makino K."/>
            <person name="Ohnishi M."/>
            <person name="Kurokawa K."/>
            <person name="Ishii K."/>
            <person name="Yokoyama K."/>
            <person name="Han C.-G."/>
            <person name="Ohtsubo E."/>
            <person name="Nakayama K."/>
            <person name="Murata T."/>
            <person name="Tanaka M."/>
            <person name="Tobe T."/>
            <person name="Iida T."/>
            <person name="Takami H."/>
            <person name="Honda T."/>
            <person name="Sasakawa C."/>
            <person name="Ogasawara N."/>
            <person name="Yasunaga T."/>
            <person name="Kuhara S."/>
            <person name="Shiba T."/>
            <person name="Hattori M."/>
            <person name="Shinagawa H."/>
        </authorList>
    </citation>
    <scope>NUCLEOTIDE SEQUENCE [LARGE SCALE GENOMIC DNA]</scope>
    <source>
        <strain>O157:H7 / Sakai / RIMD 0509952 / EHEC</strain>
    </source>
</reference>